<comment type="function">
    <text evidence="1">Exhibits a very high intrinsic GTPase hydrolysis rate. Involved in the addition of a carboxymethylaminomethyl (cmnm) group at the wobble position (U34) of certain tRNAs, forming tRNA-cmnm(5)s(2)U34.</text>
</comment>
<comment type="cofactor">
    <cofactor evidence="1">
        <name>K(+)</name>
        <dbReference type="ChEBI" id="CHEBI:29103"/>
    </cofactor>
    <text evidence="1">Binds 1 potassium ion per subunit.</text>
</comment>
<comment type="subunit">
    <text evidence="1">Homodimer. Heterotetramer of two MnmE and two MnmG subunits.</text>
</comment>
<comment type="subcellular location">
    <subcellularLocation>
        <location evidence="1">Cytoplasm</location>
    </subcellularLocation>
</comment>
<comment type="similarity">
    <text evidence="1">Belongs to the TRAFAC class TrmE-Era-EngA-EngB-Septin-like GTPase superfamily. TrmE GTPase family.</text>
</comment>
<reference key="1">
    <citation type="submission" date="2007-03" db="EMBL/GenBank/DDBJ databases">
        <title>Complete sequence of Prosthecochloris vibrioformis DSM 265.</title>
        <authorList>
            <consortium name="US DOE Joint Genome Institute"/>
            <person name="Copeland A."/>
            <person name="Lucas S."/>
            <person name="Lapidus A."/>
            <person name="Barry K."/>
            <person name="Detter J.C."/>
            <person name="Glavina del Rio T."/>
            <person name="Hammon N."/>
            <person name="Israni S."/>
            <person name="Pitluck S."/>
            <person name="Schmutz J."/>
            <person name="Larimer F."/>
            <person name="Land M."/>
            <person name="Hauser L."/>
            <person name="Mikhailova N."/>
            <person name="Li T."/>
            <person name="Overmann J."/>
            <person name="Schuster S.C."/>
            <person name="Bryant D.A."/>
            <person name="Richardson P."/>
        </authorList>
    </citation>
    <scope>NUCLEOTIDE SEQUENCE [LARGE SCALE GENOMIC DNA]</scope>
    <source>
        <strain>DSM 265 / 1930</strain>
    </source>
</reference>
<feature type="chain" id="PRO_0000345872" description="tRNA modification GTPase MnmE">
    <location>
        <begin position="1"/>
        <end position="473"/>
    </location>
</feature>
<feature type="domain" description="TrmE-type G">
    <location>
        <begin position="230"/>
        <end position="394"/>
    </location>
</feature>
<feature type="binding site" evidence="1">
    <location>
        <position position="30"/>
    </location>
    <ligand>
        <name>(6S)-5-formyl-5,6,7,8-tetrahydrofolate</name>
        <dbReference type="ChEBI" id="CHEBI:57457"/>
    </ligand>
</feature>
<feature type="binding site" evidence="1">
    <location>
        <position position="95"/>
    </location>
    <ligand>
        <name>(6S)-5-formyl-5,6,7,8-tetrahydrofolate</name>
        <dbReference type="ChEBI" id="CHEBI:57457"/>
    </ligand>
</feature>
<feature type="binding site" evidence="1">
    <location>
        <position position="134"/>
    </location>
    <ligand>
        <name>(6S)-5-formyl-5,6,7,8-tetrahydrofolate</name>
        <dbReference type="ChEBI" id="CHEBI:57457"/>
    </ligand>
</feature>
<feature type="binding site" evidence="1">
    <location>
        <begin position="240"/>
        <end position="245"/>
    </location>
    <ligand>
        <name>GTP</name>
        <dbReference type="ChEBI" id="CHEBI:37565"/>
    </ligand>
</feature>
<feature type="binding site" evidence="1">
    <location>
        <position position="244"/>
    </location>
    <ligand>
        <name>Mg(2+)</name>
        <dbReference type="ChEBI" id="CHEBI:18420"/>
    </ligand>
</feature>
<feature type="binding site" evidence="1">
    <location>
        <begin position="259"/>
        <end position="265"/>
    </location>
    <ligand>
        <name>GTP</name>
        <dbReference type="ChEBI" id="CHEBI:37565"/>
    </ligand>
</feature>
<feature type="binding site" evidence="1">
    <location>
        <position position="265"/>
    </location>
    <ligand>
        <name>Mg(2+)</name>
        <dbReference type="ChEBI" id="CHEBI:18420"/>
    </ligand>
</feature>
<feature type="binding site" evidence="1">
    <location>
        <begin position="284"/>
        <end position="287"/>
    </location>
    <ligand>
        <name>GTP</name>
        <dbReference type="ChEBI" id="CHEBI:37565"/>
    </ligand>
</feature>
<feature type="binding site" evidence="1">
    <location>
        <position position="473"/>
    </location>
    <ligand>
        <name>(6S)-5-formyl-5,6,7,8-tetrahydrofolate</name>
        <dbReference type="ChEBI" id="CHEBI:57457"/>
    </ligand>
</feature>
<sequence>MTERPLTPEAGEAIAAIATPVGVGALAIVRMSGRGVLEIADRVFRKKGGTAFSFKEAEGFSAHFGTLSDSRGMVDEVIALVFRAPSSFTMEDMVEFTCHGGPVVVRHLLQALLDSGCRLAEPGEFTRRAFLSGRIDLLQAEAIGEMIHARTESAFRTAVTQMQGNLSRHLQEMRAGLLQSCALLELELDFSEDDVEFQSRDALRLEVGRLQGEILRLVESYREGHLLTEGVAAVIAGRPNAGKSTLLNALLGHERAIVSHMPGTTRDYIEECFIHEKTMFRLTDTAGLRHSDEEVEHEGIRRSYRKISEADLMLYIIDSSEGDMQQEAAAARELRQRHPESRMIVVANKTDLAPDAGGMIAQLQSETACPVIAMAASKGDGLNELKSTMAGMVEGLDKLHEASVLVTSLRHYEALRNAADSLDNALQLITAREPAELIAFELRSALDYVGEITGKVVSQELLNTIFDQFCIGK</sequence>
<evidence type="ECO:0000255" key="1">
    <source>
        <dbReference type="HAMAP-Rule" id="MF_00379"/>
    </source>
</evidence>
<accession>A4SGR9</accession>
<dbReference type="EC" id="3.6.-.-" evidence="1"/>
<dbReference type="EMBL" id="CP000607">
    <property type="protein sequence ID" value="ABP37678.1"/>
    <property type="molecule type" value="Genomic_DNA"/>
</dbReference>
<dbReference type="SMR" id="A4SGR9"/>
<dbReference type="STRING" id="290318.Cvib_1668"/>
<dbReference type="KEGG" id="pvi:Cvib_1668"/>
<dbReference type="eggNOG" id="COG0486">
    <property type="taxonomic scope" value="Bacteria"/>
</dbReference>
<dbReference type="HOGENOM" id="CLU_019624_4_1_10"/>
<dbReference type="OrthoDB" id="9805918at2"/>
<dbReference type="GO" id="GO:0005829">
    <property type="term" value="C:cytosol"/>
    <property type="evidence" value="ECO:0007669"/>
    <property type="project" value="TreeGrafter"/>
</dbReference>
<dbReference type="GO" id="GO:0005525">
    <property type="term" value="F:GTP binding"/>
    <property type="evidence" value="ECO:0007669"/>
    <property type="project" value="UniProtKB-UniRule"/>
</dbReference>
<dbReference type="GO" id="GO:0003924">
    <property type="term" value="F:GTPase activity"/>
    <property type="evidence" value="ECO:0007669"/>
    <property type="project" value="UniProtKB-UniRule"/>
</dbReference>
<dbReference type="GO" id="GO:0046872">
    <property type="term" value="F:metal ion binding"/>
    <property type="evidence" value="ECO:0007669"/>
    <property type="project" value="UniProtKB-KW"/>
</dbReference>
<dbReference type="GO" id="GO:0030488">
    <property type="term" value="P:tRNA methylation"/>
    <property type="evidence" value="ECO:0007669"/>
    <property type="project" value="TreeGrafter"/>
</dbReference>
<dbReference type="GO" id="GO:0002098">
    <property type="term" value="P:tRNA wobble uridine modification"/>
    <property type="evidence" value="ECO:0007669"/>
    <property type="project" value="TreeGrafter"/>
</dbReference>
<dbReference type="CDD" id="cd04164">
    <property type="entry name" value="trmE"/>
    <property type="match status" value="1"/>
</dbReference>
<dbReference type="CDD" id="cd14858">
    <property type="entry name" value="TrmE_N"/>
    <property type="match status" value="1"/>
</dbReference>
<dbReference type="FunFam" id="3.30.1360.120:FF:000003">
    <property type="entry name" value="tRNA modification GTPase MnmE"/>
    <property type="match status" value="1"/>
</dbReference>
<dbReference type="Gene3D" id="3.40.50.300">
    <property type="entry name" value="P-loop containing nucleotide triphosphate hydrolases"/>
    <property type="match status" value="1"/>
</dbReference>
<dbReference type="Gene3D" id="3.30.1360.120">
    <property type="entry name" value="Probable tRNA modification gtpase trme, domain 1"/>
    <property type="match status" value="1"/>
</dbReference>
<dbReference type="Gene3D" id="1.20.120.430">
    <property type="entry name" value="tRNA modification GTPase MnmE domain 2"/>
    <property type="match status" value="1"/>
</dbReference>
<dbReference type="HAMAP" id="MF_00379">
    <property type="entry name" value="GTPase_MnmE"/>
    <property type="match status" value="1"/>
</dbReference>
<dbReference type="InterPro" id="IPR031168">
    <property type="entry name" value="G_TrmE"/>
</dbReference>
<dbReference type="InterPro" id="IPR006073">
    <property type="entry name" value="GTP-bd"/>
</dbReference>
<dbReference type="InterPro" id="IPR018948">
    <property type="entry name" value="GTP-bd_TrmE_N"/>
</dbReference>
<dbReference type="InterPro" id="IPR004520">
    <property type="entry name" value="GTPase_MnmE"/>
</dbReference>
<dbReference type="InterPro" id="IPR027368">
    <property type="entry name" value="MnmE_dom2"/>
</dbReference>
<dbReference type="InterPro" id="IPR025867">
    <property type="entry name" value="MnmE_helical"/>
</dbReference>
<dbReference type="InterPro" id="IPR027417">
    <property type="entry name" value="P-loop_NTPase"/>
</dbReference>
<dbReference type="InterPro" id="IPR005225">
    <property type="entry name" value="Small_GTP-bd"/>
</dbReference>
<dbReference type="InterPro" id="IPR027266">
    <property type="entry name" value="TrmE/GcvT_dom1"/>
</dbReference>
<dbReference type="NCBIfam" id="TIGR00450">
    <property type="entry name" value="mnmE_trmE_thdF"/>
    <property type="match status" value="1"/>
</dbReference>
<dbReference type="NCBIfam" id="TIGR00231">
    <property type="entry name" value="small_GTP"/>
    <property type="match status" value="1"/>
</dbReference>
<dbReference type="PANTHER" id="PTHR42714">
    <property type="entry name" value="TRNA MODIFICATION GTPASE GTPBP3"/>
    <property type="match status" value="1"/>
</dbReference>
<dbReference type="PANTHER" id="PTHR42714:SF2">
    <property type="entry name" value="TRNA MODIFICATION GTPASE GTPBP3, MITOCHONDRIAL"/>
    <property type="match status" value="1"/>
</dbReference>
<dbReference type="Pfam" id="PF01926">
    <property type="entry name" value="MMR_HSR1"/>
    <property type="match status" value="1"/>
</dbReference>
<dbReference type="Pfam" id="PF12631">
    <property type="entry name" value="MnmE_helical"/>
    <property type="match status" value="1"/>
</dbReference>
<dbReference type="Pfam" id="PF10396">
    <property type="entry name" value="TrmE_N"/>
    <property type="match status" value="1"/>
</dbReference>
<dbReference type="SUPFAM" id="SSF52540">
    <property type="entry name" value="P-loop containing nucleoside triphosphate hydrolases"/>
    <property type="match status" value="1"/>
</dbReference>
<dbReference type="SUPFAM" id="SSF116878">
    <property type="entry name" value="TrmE connector domain"/>
    <property type="match status" value="1"/>
</dbReference>
<dbReference type="PROSITE" id="PS51709">
    <property type="entry name" value="G_TRME"/>
    <property type="match status" value="1"/>
</dbReference>
<name>MNME_CHLPM</name>
<organism>
    <name type="scientific">Chlorobium phaeovibrioides (strain DSM 265 / 1930)</name>
    <name type="common">Prosthecochloris vibrioformis (strain DSM 265)</name>
    <dbReference type="NCBI Taxonomy" id="290318"/>
    <lineage>
        <taxon>Bacteria</taxon>
        <taxon>Pseudomonadati</taxon>
        <taxon>Chlorobiota</taxon>
        <taxon>Chlorobiia</taxon>
        <taxon>Chlorobiales</taxon>
        <taxon>Chlorobiaceae</taxon>
        <taxon>Chlorobium/Pelodictyon group</taxon>
        <taxon>Chlorobium</taxon>
    </lineage>
</organism>
<gene>
    <name evidence="1" type="primary">mnmE</name>
    <name evidence="1" type="synonym">trmE</name>
    <name type="ordered locus">Cvib_1668</name>
</gene>
<proteinExistence type="inferred from homology"/>
<keyword id="KW-0963">Cytoplasm</keyword>
<keyword id="KW-0342">GTP-binding</keyword>
<keyword id="KW-0378">Hydrolase</keyword>
<keyword id="KW-0460">Magnesium</keyword>
<keyword id="KW-0479">Metal-binding</keyword>
<keyword id="KW-0547">Nucleotide-binding</keyword>
<keyword id="KW-0630">Potassium</keyword>
<keyword id="KW-0819">tRNA processing</keyword>
<protein>
    <recommendedName>
        <fullName evidence="1">tRNA modification GTPase MnmE</fullName>
        <ecNumber evidence="1">3.6.-.-</ecNumber>
    </recommendedName>
</protein>